<accession>P0C7Y8</accession>
<sequence length="21" mass="2260">MGIIAGIIKVIKSLIEQFTGK</sequence>
<keyword id="KW-0204">Cytolysis</keyword>
<keyword id="KW-0843">Virulence</keyword>
<proteinExistence type="inferred from homology"/>
<organism>
    <name type="scientific">Staphylococcus aureus (strain MRSA252)</name>
    <dbReference type="NCBI Taxonomy" id="282458"/>
    <lineage>
        <taxon>Bacteria</taxon>
        <taxon>Bacillati</taxon>
        <taxon>Bacillota</taxon>
        <taxon>Bacilli</taxon>
        <taxon>Bacillales</taxon>
        <taxon>Staphylococcaceae</taxon>
        <taxon>Staphylococcus</taxon>
    </lineage>
</organism>
<gene>
    <name type="primary">psmA1</name>
    <name type="ordered locus">SAR0451.4</name>
</gene>
<reference key="1">
    <citation type="journal article" date="2004" name="Proc. Natl. Acad. Sci. U.S.A.">
        <title>Complete genomes of two clinical Staphylococcus aureus strains: evidence for the rapid evolution of virulence and drug resistance.</title>
        <authorList>
            <person name="Holden M.T.G."/>
            <person name="Feil E.J."/>
            <person name="Lindsay J.A."/>
            <person name="Peacock S.J."/>
            <person name="Day N.P.J."/>
            <person name="Enright M.C."/>
            <person name="Foster T.J."/>
            <person name="Moore C.E."/>
            <person name="Hurst L."/>
            <person name="Atkin R."/>
            <person name="Barron A."/>
            <person name="Bason N."/>
            <person name="Bentley S.D."/>
            <person name="Chillingworth C."/>
            <person name="Chillingworth T."/>
            <person name="Churcher C."/>
            <person name="Clark L."/>
            <person name="Corton C."/>
            <person name="Cronin A."/>
            <person name="Doggett J."/>
            <person name="Dowd L."/>
            <person name="Feltwell T."/>
            <person name="Hance Z."/>
            <person name="Harris B."/>
            <person name="Hauser H."/>
            <person name="Holroyd S."/>
            <person name="Jagels K."/>
            <person name="James K.D."/>
            <person name="Lennard N."/>
            <person name="Line A."/>
            <person name="Mayes R."/>
            <person name="Moule S."/>
            <person name="Mungall K."/>
            <person name="Ormond D."/>
            <person name="Quail M.A."/>
            <person name="Rabbinowitsch E."/>
            <person name="Rutherford K.M."/>
            <person name="Sanders M."/>
            <person name="Sharp S."/>
            <person name="Simmonds M."/>
            <person name="Stevens K."/>
            <person name="Whitehead S."/>
            <person name="Barrell B.G."/>
            <person name="Spratt B.G."/>
            <person name="Parkhill J."/>
        </authorList>
    </citation>
    <scope>NUCLEOTIDE SEQUENCE [LARGE SCALE GENOMIC DNA]</scope>
    <source>
        <strain>MRSA252</strain>
    </source>
</reference>
<feature type="peptide" id="PRO_0000345039" description="Phenol-soluble modulin alpha 1 peptide">
    <location>
        <begin position="1"/>
        <end position="21"/>
    </location>
</feature>
<comment type="function">
    <text evidence="1">Peptide which can recruit, activate and subsequently lyse human neutrophils, thus eliminating the main cellular defense against infection.</text>
</comment>
<comment type="similarity">
    <text evidence="2">Belongs to the phenol-soluble modulin alpha peptides family.</text>
</comment>
<protein>
    <recommendedName>
        <fullName>Phenol-soluble modulin alpha 1 peptide</fullName>
    </recommendedName>
</protein>
<evidence type="ECO:0000250" key="1">
    <source>
        <dbReference type="UniProtKB" id="A9JX05"/>
    </source>
</evidence>
<evidence type="ECO:0000305" key="2"/>
<dbReference type="EMBL" id="BX571856">
    <property type="status" value="NOT_ANNOTATED_CDS"/>
    <property type="molecule type" value="Genomic_DNA"/>
</dbReference>
<dbReference type="SMR" id="P0C7Y8"/>
<dbReference type="Proteomes" id="UP000000596">
    <property type="component" value="Chromosome"/>
</dbReference>
<dbReference type="GO" id="GO:0031640">
    <property type="term" value="P:killing of cells of another organism"/>
    <property type="evidence" value="ECO:0007669"/>
    <property type="project" value="UniProtKB-KW"/>
</dbReference>
<dbReference type="InterPro" id="IPR031429">
    <property type="entry name" value="PSM_alpha"/>
</dbReference>
<dbReference type="NCBIfam" id="NF033425">
    <property type="entry name" value="PSM_alpha_1_2"/>
    <property type="match status" value="1"/>
</dbReference>
<dbReference type="Pfam" id="PF17063">
    <property type="entry name" value="PSMalpha"/>
    <property type="match status" value="1"/>
</dbReference>
<name>PSMA1_STAAR</name>